<organism>
    <name type="scientific">Aquifex aeolicus (strain VF5)</name>
    <dbReference type="NCBI Taxonomy" id="224324"/>
    <lineage>
        <taxon>Bacteria</taxon>
        <taxon>Pseudomonadati</taxon>
        <taxon>Aquificota</taxon>
        <taxon>Aquificia</taxon>
        <taxon>Aquificales</taxon>
        <taxon>Aquificaceae</taxon>
        <taxon>Aquifex</taxon>
    </lineage>
</organism>
<keyword id="KW-0963">Cytoplasm</keyword>
<keyword id="KW-0227">DNA damage</keyword>
<keyword id="KW-0228">DNA excision</keyword>
<keyword id="KW-0234">DNA repair</keyword>
<keyword id="KW-0267">Excision nuclease</keyword>
<keyword id="KW-1185">Reference proteome</keyword>
<keyword id="KW-0742">SOS response</keyword>
<dbReference type="EMBL" id="AE000657">
    <property type="protein sequence ID" value="AAC07850.1"/>
    <property type="molecule type" value="Genomic_DNA"/>
</dbReference>
<dbReference type="PIR" id="C70482">
    <property type="entry name" value="C70482"/>
</dbReference>
<dbReference type="RefSeq" id="NP_214456.1">
    <property type="nucleotide sequence ID" value="NC_000918.1"/>
</dbReference>
<dbReference type="RefSeq" id="WP_010881392.1">
    <property type="nucleotide sequence ID" value="NC_000918.1"/>
</dbReference>
<dbReference type="SMR" id="O67887"/>
<dbReference type="FunCoup" id="O67887">
    <property type="interactions" value="190"/>
</dbReference>
<dbReference type="STRING" id="224324.aq_2126"/>
<dbReference type="EnsemblBacteria" id="AAC07850">
    <property type="protein sequence ID" value="AAC07850"/>
    <property type="gene ID" value="aq_2126"/>
</dbReference>
<dbReference type="KEGG" id="aae:aq_2126"/>
<dbReference type="PATRIC" id="fig|224324.8.peg.1641"/>
<dbReference type="eggNOG" id="COG0322">
    <property type="taxonomic scope" value="Bacteria"/>
</dbReference>
<dbReference type="HOGENOM" id="CLU_014841_3_2_0"/>
<dbReference type="InParanoid" id="O67887"/>
<dbReference type="OrthoDB" id="9804933at2"/>
<dbReference type="Proteomes" id="UP000000798">
    <property type="component" value="Chromosome"/>
</dbReference>
<dbReference type="GO" id="GO:0005737">
    <property type="term" value="C:cytoplasm"/>
    <property type="evidence" value="ECO:0007669"/>
    <property type="project" value="UniProtKB-SubCell"/>
</dbReference>
<dbReference type="GO" id="GO:0009380">
    <property type="term" value="C:excinuclease repair complex"/>
    <property type="evidence" value="ECO:0000318"/>
    <property type="project" value="GO_Central"/>
</dbReference>
<dbReference type="GO" id="GO:0003677">
    <property type="term" value="F:DNA binding"/>
    <property type="evidence" value="ECO:0007669"/>
    <property type="project" value="UniProtKB-UniRule"/>
</dbReference>
<dbReference type="GO" id="GO:0009381">
    <property type="term" value="F:excinuclease ABC activity"/>
    <property type="evidence" value="ECO:0007669"/>
    <property type="project" value="UniProtKB-UniRule"/>
</dbReference>
<dbReference type="GO" id="GO:0006974">
    <property type="term" value="P:DNA damage response"/>
    <property type="evidence" value="ECO:0000318"/>
    <property type="project" value="GO_Central"/>
</dbReference>
<dbReference type="GO" id="GO:0006289">
    <property type="term" value="P:nucleotide-excision repair"/>
    <property type="evidence" value="ECO:0007669"/>
    <property type="project" value="UniProtKB-UniRule"/>
</dbReference>
<dbReference type="GO" id="GO:0009432">
    <property type="term" value="P:SOS response"/>
    <property type="evidence" value="ECO:0007669"/>
    <property type="project" value="UniProtKB-UniRule"/>
</dbReference>
<dbReference type="CDD" id="cd10434">
    <property type="entry name" value="GIY-YIG_UvrC_Cho"/>
    <property type="match status" value="1"/>
</dbReference>
<dbReference type="FunFam" id="3.30.420.340:FF:000004">
    <property type="entry name" value="UvrABC system protein C"/>
    <property type="match status" value="1"/>
</dbReference>
<dbReference type="FunFam" id="3.40.1440.10:FF:000001">
    <property type="entry name" value="UvrABC system protein C"/>
    <property type="match status" value="1"/>
</dbReference>
<dbReference type="Gene3D" id="1.10.150.20">
    <property type="entry name" value="5' to 3' exonuclease, C-terminal subdomain"/>
    <property type="match status" value="1"/>
</dbReference>
<dbReference type="Gene3D" id="3.40.1440.10">
    <property type="entry name" value="GIY-YIG endonuclease"/>
    <property type="match status" value="1"/>
</dbReference>
<dbReference type="Gene3D" id="3.30.420.340">
    <property type="entry name" value="UvrC, RNAse H endonuclease domain"/>
    <property type="match status" value="1"/>
</dbReference>
<dbReference type="HAMAP" id="MF_00203">
    <property type="entry name" value="UvrC"/>
    <property type="match status" value="1"/>
</dbReference>
<dbReference type="InterPro" id="IPR000305">
    <property type="entry name" value="GIY-YIG_endonuc"/>
</dbReference>
<dbReference type="InterPro" id="IPR035901">
    <property type="entry name" value="GIY-YIG_endonuc_sf"/>
</dbReference>
<dbReference type="InterPro" id="IPR047296">
    <property type="entry name" value="GIY-YIG_UvrC_Cho"/>
</dbReference>
<dbReference type="InterPro" id="IPR010994">
    <property type="entry name" value="RuvA_2-like"/>
</dbReference>
<dbReference type="InterPro" id="IPR001943">
    <property type="entry name" value="UVR_dom"/>
</dbReference>
<dbReference type="InterPro" id="IPR036876">
    <property type="entry name" value="UVR_dom_sf"/>
</dbReference>
<dbReference type="InterPro" id="IPR050066">
    <property type="entry name" value="UvrABC_protein_C"/>
</dbReference>
<dbReference type="InterPro" id="IPR004791">
    <property type="entry name" value="UvrC"/>
</dbReference>
<dbReference type="InterPro" id="IPR001162">
    <property type="entry name" value="UvrC_RNase_H_dom"/>
</dbReference>
<dbReference type="InterPro" id="IPR038476">
    <property type="entry name" value="UvrC_RNase_H_dom_sf"/>
</dbReference>
<dbReference type="NCBIfam" id="NF011261">
    <property type="entry name" value="PRK14667.1"/>
    <property type="match status" value="1"/>
</dbReference>
<dbReference type="NCBIfam" id="TIGR00194">
    <property type="entry name" value="uvrC"/>
    <property type="match status" value="1"/>
</dbReference>
<dbReference type="PANTHER" id="PTHR30562:SF1">
    <property type="entry name" value="UVRABC SYSTEM PROTEIN C"/>
    <property type="match status" value="1"/>
</dbReference>
<dbReference type="PANTHER" id="PTHR30562">
    <property type="entry name" value="UVRC/OXIDOREDUCTASE"/>
    <property type="match status" value="1"/>
</dbReference>
<dbReference type="Pfam" id="PF01541">
    <property type="entry name" value="GIY-YIG"/>
    <property type="match status" value="1"/>
</dbReference>
<dbReference type="Pfam" id="PF08459">
    <property type="entry name" value="UvrC_RNaseH_dom"/>
    <property type="match status" value="1"/>
</dbReference>
<dbReference type="SMART" id="SM00465">
    <property type="entry name" value="GIYc"/>
    <property type="match status" value="1"/>
</dbReference>
<dbReference type="SUPFAM" id="SSF46600">
    <property type="entry name" value="C-terminal UvrC-binding domain of UvrB"/>
    <property type="match status" value="1"/>
</dbReference>
<dbReference type="SUPFAM" id="SSF82771">
    <property type="entry name" value="GIY-YIG endonuclease"/>
    <property type="match status" value="1"/>
</dbReference>
<dbReference type="SUPFAM" id="SSF47781">
    <property type="entry name" value="RuvA domain 2-like"/>
    <property type="match status" value="1"/>
</dbReference>
<dbReference type="PROSITE" id="PS50164">
    <property type="entry name" value="GIY_YIG"/>
    <property type="match status" value="1"/>
</dbReference>
<dbReference type="PROSITE" id="PS50151">
    <property type="entry name" value="UVR"/>
    <property type="match status" value="1"/>
</dbReference>
<dbReference type="PROSITE" id="PS50165">
    <property type="entry name" value="UVRC"/>
    <property type="match status" value="1"/>
</dbReference>
<evidence type="ECO:0000255" key="1">
    <source>
        <dbReference type="HAMAP-Rule" id="MF_00203"/>
    </source>
</evidence>
<proteinExistence type="inferred from homology"/>
<accession>O67887</accession>
<sequence length="566" mass="65596">MAKTGKVENLIQNAPEKPGVYLFKKGNRPIYIGKAKNLKKRLLQHLKASEYDSKERAIISNSDNLEWIVTRNEYEALVLEIDLIQQYKPRYNVLHKFGGGYPMLLLTKDEYPTIKVVRGTEHEGELFGPFLQSKKAYKVKKLIHNLFKLRTCDPLPKRSEPCMDYHLGLCSAPCCGFVSKEEYELAVSSARALLTGEVAEVLPKLYEKIEEFSKELMFEKCAHIRDQIIALENLAKGQAVSALPFREGDIFYKFGSRLGLLLVRSSKLVSKEIFDLESDEEVEEVILGYYYSNYVPRKVITNFELSEEVKEWIRNRAKGEVEFSGEIPKELKEVLEENLGEGINEEVLKKEFAEKLGMPVPRVIEGFDISHFYGEDIVGSCVVWKGGKMSKKDYRRYKVKTISRIDDYLALEEVLTRRAKRILKGEVEKPDIWLIDGGKGQLNVGIRVKKRTGLDVKVFSLAKEEEIIYTEDGREIRLKENPILYRVFGEIRDEAHRFALSYNRKLREKRYMEDILSKIKGIGEQKKKIIYKNFETLYDFIEAKDEELRRLGINPSLKQEVKKWLS</sequence>
<gene>
    <name evidence="1" type="primary">uvrC</name>
    <name type="ordered locus">aq_2126</name>
</gene>
<reference key="1">
    <citation type="journal article" date="1998" name="Nature">
        <title>The complete genome of the hyperthermophilic bacterium Aquifex aeolicus.</title>
        <authorList>
            <person name="Deckert G."/>
            <person name="Warren P.V."/>
            <person name="Gaasterland T."/>
            <person name="Young W.G."/>
            <person name="Lenox A.L."/>
            <person name="Graham D.E."/>
            <person name="Overbeek R."/>
            <person name="Snead M.A."/>
            <person name="Keller M."/>
            <person name="Aujay M."/>
            <person name="Huber R."/>
            <person name="Feldman R.A."/>
            <person name="Short J.M."/>
            <person name="Olsen G.J."/>
            <person name="Swanson R.V."/>
        </authorList>
    </citation>
    <scope>NUCLEOTIDE SEQUENCE [LARGE SCALE GENOMIC DNA]</scope>
    <source>
        <strain>VF5</strain>
    </source>
</reference>
<protein>
    <recommendedName>
        <fullName evidence="1">UvrABC system protein C</fullName>
        <shortName evidence="1">Protein UvrC</shortName>
    </recommendedName>
    <alternativeName>
        <fullName evidence="1">Excinuclease ABC subunit C</fullName>
    </alternativeName>
</protein>
<comment type="function">
    <text evidence="1">The UvrABC repair system catalyzes the recognition and processing of DNA lesions. UvrC both incises the 5' and 3' sides of the lesion. The N-terminal half is responsible for the 3' incision and the C-terminal half is responsible for the 5' incision.</text>
</comment>
<comment type="subunit">
    <text evidence="1">Interacts with UvrB in an incision complex.</text>
</comment>
<comment type="subcellular location">
    <subcellularLocation>
        <location evidence="1">Cytoplasm</location>
    </subcellularLocation>
</comment>
<comment type="similarity">
    <text evidence="1">Belongs to the UvrC family.</text>
</comment>
<feature type="chain" id="PRO_0000138286" description="UvrABC system protein C">
    <location>
        <begin position="1"/>
        <end position="566"/>
    </location>
</feature>
<feature type="domain" description="GIY-YIG" evidence="1">
    <location>
        <begin position="16"/>
        <end position="93"/>
    </location>
</feature>
<feature type="domain" description="UVR" evidence="1">
    <location>
        <begin position="199"/>
        <end position="234"/>
    </location>
</feature>
<name>UVRC_AQUAE</name>